<protein>
    <recommendedName>
        <fullName>Intraflagellar transport protein 172 homolog</fullName>
    </recommendedName>
</protein>
<dbReference type="EMBL" id="AY618923">
    <property type="protein sequence ID" value="AAT39119.1"/>
    <property type="molecule type" value="mRNA"/>
</dbReference>
<dbReference type="EMBL" id="BX511178">
    <property type="protein sequence ID" value="CAI20958.1"/>
    <property type="molecule type" value="Genomic_DNA"/>
</dbReference>
<dbReference type="RefSeq" id="NP_001002312.1">
    <property type="nucleotide sequence ID" value="NM_001002312.1"/>
</dbReference>
<dbReference type="SMR" id="Q5RHH4"/>
<dbReference type="FunCoup" id="Q5RHH4">
    <property type="interactions" value="359"/>
</dbReference>
<dbReference type="STRING" id="7955.ENSDARP00000061333"/>
<dbReference type="PaxDb" id="7955-ENSDARP00000061333"/>
<dbReference type="Ensembl" id="ENSDART00000061334">
    <property type="protein sequence ID" value="ENSDARP00000061333"/>
    <property type="gene ID" value="ENSDARG00000041870"/>
</dbReference>
<dbReference type="GeneID" id="432389"/>
<dbReference type="KEGG" id="dre:432389"/>
<dbReference type="AGR" id="ZFIN:ZDB-GENE-040827-1"/>
<dbReference type="CTD" id="26160"/>
<dbReference type="ZFIN" id="ZDB-GENE-040827-1">
    <property type="gene designation" value="ift172"/>
</dbReference>
<dbReference type="eggNOG" id="KOG3616">
    <property type="taxonomic scope" value="Eukaryota"/>
</dbReference>
<dbReference type="HOGENOM" id="CLU_002716_0_0_1"/>
<dbReference type="InParanoid" id="Q5RHH4"/>
<dbReference type="OMA" id="LKRTIWQ"/>
<dbReference type="OrthoDB" id="2186662at2759"/>
<dbReference type="PhylomeDB" id="Q5RHH4"/>
<dbReference type="TreeFam" id="TF312901"/>
<dbReference type="Reactome" id="R-DRE-5610787">
    <property type="pathway name" value="Hedgehog 'off' state"/>
</dbReference>
<dbReference type="PRO" id="PR:Q5RHH4"/>
<dbReference type="Proteomes" id="UP000000437">
    <property type="component" value="Chromosome 20"/>
</dbReference>
<dbReference type="Bgee" id="ENSDARG00000041870">
    <property type="expression patterns" value="Expressed in testis and 25 other cell types or tissues"/>
</dbReference>
<dbReference type="GO" id="GO:0005930">
    <property type="term" value="C:axoneme"/>
    <property type="evidence" value="ECO:0000318"/>
    <property type="project" value="GO_Central"/>
</dbReference>
<dbReference type="GO" id="GO:0036064">
    <property type="term" value="C:ciliary basal body"/>
    <property type="evidence" value="ECO:0000318"/>
    <property type="project" value="GO_Central"/>
</dbReference>
<dbReference type="GO" id="GO:0005929">
    <property type="term" value="C:cilium"/>
    <property type="evidence" value="ECO:0000250"/>
    <property type="project" value="UniProtKB"/>
</dbReference>
<dbReference type="GO" id="GO:0030992">
    <property type="term" value="C:intraciliary transport particle B"/>
    <property type="evidence" value="ECO:0000250"/>
    <property type="project" value="UniProtKB"/>
</dbReference>
<dbReference type="GO" id="GO:0060271">
    <property type="term" value="P:cilium assembly"/>
    <property type="evidence" value="ECO:0000315"/>
    <property type="project" value="ZFIN"/>
</dbReference>
<dbReference type="GO" id="GO:0042073">
    <property type="term" value="P:intraciliary transport"/>
    <property type="evidence" value="ECO:0000318"/>
    <property type="project" value="GO_Central"/>
</dbReference>
<dbReference type="GO" id="GO:0045494">
    <property type="term" value="P:photoreceptor cell maintenance"/>
    <property type="evidence" value="ECO:0000315"/>
    <property type="project" value="ZFIN"/>
</dbReference>
<dbReference type="GO" id="GO:0048793">
    <property type="term" value="P:pronephros development"/>
    <property type="evidence" value="ECO:0000316"/>
    <property type="project" value="ZFIN"/>
</dbReference>
<dbReference type="GO" id="GO:0032006">
    <property type="term" value="P:regulation of TOR signaling"/>
    <property type="evidence" value="ECO:0000315"/>
    <property type="project" value="ZFIN"/>
</dbReference>
<dbReference type="GO" id="GO:0060041">
    <property type="term" value="P:retina development in camera-type eye"/>
    <property type="evidence" value="ECO:0000315"/>
    <property type="project" value="ZFIN"/>
</dbReference>
<dbReference type="FunFam" id="1.25.40.470:FF:000008">
    <property type="entry name" value="Intraflagellar transport protein 172 homolog"/>
    <property type="match status" value="1"/>
</dbReference>
<dbReference type="FunFam" id="2.130.10.10:FF:001535">
    <property type="entry name" value="Intraflagellar transport protein 172 homolog"/>
    <property type="match status" value="1"/>
</dbReference>
<dbReference type="FunFam" id="1.25.40.470:FF:000012">
    <property type="entry name" value="intraflagellar transport protein 172 homolog"/>
    <property type="match status" value="1"/>
</dbReference>
<dbReference type="FunFam" id="1.25.40.470:FF:000013">
    <property type="entry name" value="intraflagellar transport protein 172 homolog"/>
    <property type="match status" value="1"/>
</dbReference>
<dbReference type="FunFam" id="2.130.10.10:FF:002910">
    <property type="entry name" value="Predicted protein"/>
    <property type="match status" value="1"/>
</dbReference>
<dbReference type="Gene3D" id="1.25.40.470">
    <property type="match status" value="4"/>
</dbReference>
<dbReference type="Gene3D" id="2.130.10.10">
    <property type="entry name" value="YVTN repeat-like/Quinoprotein amine dehydrogenase"/>
    <property type="match status" value="2"/>
</dbReference>
<dbReference type="InterPro" id="IPR056168">
    <property type="entry name" value="TPR_IF140/IFT172/WDR19"/>
</dbReference>
<dbReference type="InterPro" id="IPR056157">
    <property type="entry name" value="TPR_IFT80_172_dom"/>
</dbReference>
<dbReference type="InterPro" id="IPR015943">
    <property type="entry name" value="WD40/YVTN_repeat-like_dom_sf"/>
</dbReference>
<dbReference type="InterPro" id="IPR036322">
    <property type="entry name" value="WD40_repeat_dom_sf"/>
</dbReference>
<dbReference type="InterPro" id="IPR001680">
    <property type="entry name" value="WD40_rpt"/>
</dbReference>
<dbReference type="PANTHER" id="PTHR15722">
    <property type="entry name" value="IFT140/172-RELATED"/>
    <property type="match status" value="1"/>
</dbReference>
<dbReference type="PANTHER" id="PTHR15722:SF2">
    <property type="entry name" value="INTRAFLAGELLAR TRANSPORT PROTEIN 172 HOMOLOG"/>
    <property type="match status" value="1"/>
</dbReference>
<dbReference type="Pfam" id="PF24762">
    <property type="entry name" value="TPR_IF140-IFT172"/>
    <property type="match status" value="1"/>
</dbReference>
<dbReference type="Pfam" id="PF23387">
    <property type="entry name" value="TPR_IFT80_172"/>
    <property type="match status" value="1"/>
</dbReference>
<dbReference type="Pfam" id="PF00400">
    <property type="entry name" value="WD40"/>
    <property type="match status" value="1"/>
</dbReference>
<dbReference type="SMART" id="SM00320">
    <property type="entry name" value="WD40"/>
    <property type="match status" value="6"/>
</dbReference>
<dbReference type="SUPFAM" id="SSF69322">
    <property type="entry name" value="Tricorn protease domain 2"/>
    <property type="match status" value="1"/>
</dbReference>
<dbReference type="SUPFAM" id="SSF50978">
    <property type="entry name" value="WD40 repeat-like"/>
    <property type="match status" value="1"/>
</dbReference>
<sequence>MQLKYMKTLLTPQDGAAKVTCMAWAPNNAKFAVCTIDRVVILYDEQGEKRDRFTTKPADPKYGKKTYVVKSMAFSPDSTKIAVAQTDNIIFVYKIGEEWGDKKVICNKFIQTSAVTSLVWPSEHAIIFGLAEGKVRQANTKTSKSSTIYGTDSYVVSLTSNVSGKGILSGHADGTVVRYFIDDEGSGESQGKLLTHACPPYALAWGTNSIIVAGCDKKIVAYGKEGNVIQTFDYSRDRAEKEFTVAASSPSGQSIVVGSFDRLRVFNWSPRKGTWDESSPKEIPNLYTITALSWKKDGSRLSVGTLCGGVEMFDCCLRRSIYKNKFEMTYVGLSQVIVRNLSTGTRVVLKSQYGYEIDEVKVMGKDQYLVAHTSDTLLLGDLVSNKLSEVAWQGSGGNEKFFFENETVCMIFNAGELALVEYGSNDILGSVRTEFMNPHLISVRLNERRQRGVEDNKKLAYLIDIKTIAIVDLVGGYNLGTISHDSKIDWLELNETGRKLLFRDKKLRLHLYDIESSVKSTMLSFCPYVQWVPGSDVVVAQNRGNLCVWYTIDSPERVTMFPLKGDIVDLERSNGKTEVIVNEGVNSISYTLDEGLIEFGTAIDDGDYYRATAFLETLEMSAETEAMWKTLSKLSLEAQQLHIAERCFAALGDVSKARFLNETNKIADAVAKEYDGDGTDHYQVKARLAMLDKNFKLAEMYYMEQNAVDEVMEMYQELHMWDECIAVAEGKGHPELDNLRRSYYSYLMETNQNEKAAEVKENEGDFTGAVNLYLKAGLPAKAAWLAMSKDELLSSQDIVSRITAALIKGEFYERAGDLFERTRNNQRALECYRKGNAFKKAVDLARVAFPAEVVKLEEVWGDYLVQQKQMDAAINHYIEAGRSIKAIEAAIAARQWKKALHILELQEDRTAAKYYLKIAQYYASVQEFEVAERLFVKGDHIKDAIDMYTQAGRWEQAHKLAVKCMTQEDVSVLYVSRAQELEKEGKYKEAERLFTTVDEPDLAITMYKKNKMYDDMIRLVAVHHKDLLQETHIHLAKELEAESRFQEAEYHYLEGQDWKAAVNMYRVNDMWEEAYRIAKTHGGANAHKQVAYLWAKSLGGEAAVKLLNKFGLLETAIDFAADNYTFDFAFELARLSMKQKIPDIHLKNAMFLEDQGKFNEAEIEFIKAGKPKEAVLMHVHNKDWSNAQRVAEAHDPESVADILVSQAKFCFDQKEFQKAEAFLLRAQRPELAIKYYKDAGMWTDAMRICKDYLPSKLSVLQKEYESEGNWGVEGMIEQAQEWEQTGEYSRAVDCYLKVKDSSNLDLLLKCWMKAAELAIKFLSHDKAVDVSQIVGPRLIQLRKYNEAAELYLNLDLIKNAIDAFIEGEEWNKAKRVAKELDPRLEEYVDKRYKEHLKNQGKVDSLVGVDVVAALDMYAERGQWEKCIDTASKQNFKVLHKYIALYATHLIKEGEVEKVLSLYIQHGVPAYSQNFNIYKRMFQELVNLRDRDCAEAFRMWSDLRDVLLLLCENLTKSSEANSPAHEEFEQMLLVAHYYATRSAAKGIDQLSSVAAKLSISLLRHTELIPADKAFYEAGLAAKAVGWENMAFIFLNRFLDLADGIDEGTLDALDHTDFQDTDIPFEVPVPSRLHVTVEKREEIREWVLTVSMDQRVEQVLPKDERGTYEASLVAASTGIRSLPCVITGYPVLRNKIEFKRPGMAANKDDWNKFLMATKTTHSPECQDVLKFITQWCGGLPSAGYSFH</sequence>
<proteinExistence type="evidence at transcript level"/>
<evidence type="ECO:0000250" key="1"/>
<evidence type="ECO:0000269" key="2">
    <source>
    </source>
</evidence>
<evidence type="ECO:0000269" key="3">
    <source>
    </source>
</evidence>
<evidence type="ECO:0000305" key="4"/>
<comment type="function">
    <text evidence="2">Required for the maintenance and formation of cilia.</text>
</comment>
<comment type="subcellular location">
    <subcellularLocation>
        <location evidence="1">Cell projection</location>
        <location evidence="1">Cilium</location>
    </subcellularLocation>
</comment>
<comment type="disruption phenotype">
    <text evidence="2 3">Fishes display cysts in the glomerular-tubular region of the kidney similar to cystic kidney disease. Knockdown of the gene with 2 morpholino oligonucleotides leads to ventral body-axis curvature, formation of kidney cysts, otolith defects, and hydrocephalus, as well as cartilage defects of the craniofacial skeleton. Knockdown of the gene in a rhodopsin-GFP transgenic line demonstrates that the level of rhodopsin-GFP is lower in ift172 morphants than controls, suggesting retinal degeneration. Scanning electron microscopy of the olfactory placode reveales ciliogenesis defects in morphants, including shortened and truncated cilia.</text>
</comment>
<comment type="similarity">
    <text evidence="4">Belongs to the IFT172 family.</text>
</comment>
<feature type="chain" id="PRO_0000328944" description="Intraflagellar transport protein 172 homolog">
    <location>
        <begin position="1"/>
        <end position="1745"/>
    </location>
</feature>
<feature type="repeat" description="WD 1">
    <location>
        <begin position="14"/>
        <end position="53"/>
    </location>
</feature>
<feature type="repeat" description="WD 2">
    <location>
        <begin position="64"/>
        <end position="103"/>
    </location>
</feature>
<feature type="repeat" description="WD 3">
    <location>
        <begin position="110"/>
        <end position="148"/>
    </location>
</feature>
<feature type="repeat" description="WD 4">
    <location>
        <begin position="150"/>
        <end position="190"/>
    </location>
</feature>
<feature type="repeat" description="WD 5">
    <location>
        <begin position="195"/>
        <end position="233"/>
    </location>
</feature>
<feature type="repeat" description="WD 6">
    <location>
        <begin position="238"/>
        <end position="278"/>
    </location>
</feature>
<feature type="repeat" description="WD 7">
    <location>
        <begin position="284"/>
        <end position="323"/>
    </location>
</feature>
<feature type="repeat" description="WD 8">
    <location>
        <begin position="483"/>
        <end position="521"/>
    </location>
</feature>
<feature type="repeat" description="WD 9">
    <location>
        <begin position="522"/>
        <end position="559"/>
    </location>
</feature>
<feature type="repeat" description="WD 10">
    <location>
        <begin position="680"/>
        <end position="725"/>
    </location>
</feature>
<feature type="repeat" description="TPR 1">
    <location>
        <begin position="691"/>
        <end position="725"/>
    </location>
</feature>
<feature type="repeat" description="TPR 2">
    <location>
        <begin position="750"/>
        <end position="784"/>
    </location>
</feature>
<feature type="repeat" description="TPR 3">
    <location>
        <begin position="809"/>
        <end position="842"/>
    </location>
</feature>
<feature type="repeat" description="TPR 4">
    <location>
        <begin position="854"/>
        <end position="887"/>
    </location>
</feature>
<feature type="repeat" description="TPR 5">
    <location>
        <begin position="912"/>
        <end position="945"/>
    </location>
</feature>
<feature type="repeat" description="TPR 6">
    <location>
        <begin position="947"/>
        <end position="971"/>
    </location>
</feature>
<feature type="repeat" description="TPR 7">
    <location>
        <begin position="972"/>
        <end position="1004"/>
    </location>
</feature>
<feature type="repeat" description="TPR 8">
    <location>
        <begin position="1042"/>
        <end position="1075"/>
    </location>
</feature>
<feature type="repeat" description="TPR 9">
    <location>
        <begin position="1272"/>
        <end position="1305"/>
    </location>
</feature>
<feature type="repeat" description="TPR 10">
    <location>
        <begin position="1328"/>
        <end position="1361"/>
    </location>
</feature>
<feature type="repeat" description="TPR 11">
    <location>
        <begin position="1407"/>
        <end position="1441"/>
    </location>
</feature>
<feature type="sequence conflict" description="In Ref. 1; AAT39119." evidence="4" ref="1">
    <original>M</original>
    <variation>I</variation>
    <location>
        <position position="436"/>
    </location>
</feature>
<feature type="sequence conflict" description="In Ref. 1; AAT39119." evidence="4" ref="1">
    <original>V</original>
    <variation>I</variation>
    <location>
        <position position="799"/>
    </location>
</feature>
<feature type="sequence conflict" description="In Ref. 1; AAT39119." evidence="4" ref="1">
    <original>I</original>
    <variation>T</variation>
    <location>
        <position position="884"/>
    </location>
</feature>
<feature type="sequence conflict" description="In Ref. 1; AAT39119." evidence="4" ref="1">
    <original>Y</original>
    <variation>H</variation>
    <location>
        <position position="921"/>
    </location>
</feature>
<feature type="sequence conflict" description="In Ref. 1; AAT39119." evidence="4" ref="1">
    <original>V</original>
    <variation>L</variation>
    <location>
        <position position="925"/>
    </location>
</feature>
<feature type="sequence conflict" description="In Ref. 1; AAT39119." evidence="4" ref="1">
    <original>K</original>
    <variation>N</variation>
    <location>
        <position position="1157"/>
    </location>
</feature>
<feature type="sequence conflict" description="In Ref. 1; AAT39119." evidence="4" ref="1">
    <original>E</original>
    <variation>D</variation>
    <location>
        <position position="1287"/>
    </location>
</feature>
<gene>
    <name type="primary">ift172</name>
    <name type="ORF">si:dkey-221h15.5</name>
</gene>
<accession>Q5RHH4</accession>
<accession>Q6IVW1</accession>
<reference key="1">
    <citation type="journal article" date="2004" name="Development">
        <title>A genetic screen in zebrafish identifies cilia genes as a principal cause of cystic kidney.</title>
        <authorList>
            <person name="Sun Z."/>
            <person name="Amsterdam A."/>
            <person name="Pazour G.J."/>
            <person name="Cole D.G."/>
            <person name="Miller M.S."/>
            <person name="Hopkins N."/>
        </authorList>
    </citation>
    <scope>NUCLEOTIDE SEQUENCE [MRNA]</scope>
    <scope>DISRUPTION PHENOTYPE</scope>
    <scope>FUNCTION</scope>
</reference>
<reference key="2">
    <citation type="journal article" date="2013" name="Nature">
        <title>The zebrafish reference genome sequence and its relationship to the human genome.</title>
        <authorList>
            <person name="Howe K."/>
            <person name="Clark M.D."/>
            <person name="Torroja C.F."/>
            <person name="Torrance J."/>
            <person name="Berthelot C."/>
            <person name="Muffato M."/>
            <person name="Collins J.E."/>
            <person name="Humphray S."/>
            <person name="McLaren K."/>
            <person name="Matthews L."/>
            <person name="McLaren S."/>
            <person name="Sealy I."/>
            <person name="Caccamo M."/>
            <person name="Churcher C."/>
            <person name="Scott C."/>
            <person name="Barrett J.C."/>
            <person name="Koch R."/>
            <person name="Rauch G.J."/>
            <person name="White S."/>
            <person name="Chow W."/>
            <person name="Kilian B."/>
            <person name="Quintais L.T."/>
            <person name="Guerra-Assuncao J.A."/>
            <person name="Zhou Y."/>
            <person name="Gu Y."/>
            <person name="Yen J."/>
            <person name="Vogel J.H."/>
            <person name="Eyre T."/>
            <person name="Redmond S."/>
            <person name="Banerjee R."/>
            <person name="Chi J."/>
            <person name="Fu B."/>
            <person name="Langley E."/>
            <person name="Maguire S.F."/>
            <person name="Laird G.K."/>
            <person name="Lloyd D."/>
            <person name="Kenyon E."/>
            <person name="Donaldson S."/>
            <person name="Sehra H."/>
            <person name="Almeida-King J."/>
            <person name="Loveland J."/>
            <person name="Trevanion S."/>
            <person name="Jones M."/>
            <person name="Quail M."/>
            <person name="Willey D."/>
            <person name="Hunt A."/>
            <person name="Burton J."/>
            <person name="Sims S."/>
            <person name="McLay K."/>
            <person name="Plumb B."/>
            <person name="Davis J."/>
            <person name="Clee C."/>
            <person name="Oliver K."/>
            <person name="Clark R."/>
            <person name="Riddle C."/>
            <person name="Elliot D."/>
            <person name="Threadgold G."/>
            <person name="Harden G."/>
            <person name="Ware D."/>
            <person name="Begum S."/>
            <person name="Mortimore B."/>
            <person name="Kerry G."/>
            <person name="Heath P."/>
            <person name="Phillimore B."/>
            <person name="Tracey A."/>
            <person name="Corby N."/>
            <person name="Dunn M."/>
            <person name="Johnson C."/>
            <person name="Wood J."/>
            <person name="Clark S."/>
            <person name="Pelan S."/>
            <person name="Griffiths G."/>
            <person name="Smith M."/>
            <person name="Glithero R."/>
            <person name="Howden P."/>
            <person name="Barker N."/>
            <person name="Lloyd C."/>
            <person name="Stevens C."/>
            <person name="Harley J."/>
            <person name="Holt K."/>
            <person name="Panagiotidis G."/>
            <person name="Lovell J."/>
            <person name="Beasley H."/>
            <person name="Henderson C."/>
            <person name="Gordon D."/>
            <person name="Auger K."/>
            <person name="Wright D."/>
            <person name="Collins J."/>
            <person name="Raisen C."/>
            <person name="Dyer L."/>
            <person name="Leung K."/>
            <person name="Robertson L."/>
            <person name="Ambridge K."/>
            <person name="Leongamornlert D."/>
            <person name="McGuire S."/>
            <person name="Gilderthorp R."/>
            <person name="Griffiths C."/>
            <person name="Manthravadi D."/>
            <person name="Nichol S."/>
            <person name="Barker G."/>
            <person name="Whitehead S."/>
            <person name="Kay M."/>
            <person name="Brown J."/>
            <person name="Murnane C."/>
            <person name="Gray E."/>
            <person name="Humphries M."/>
            <person name="Sycamore N."/>
            <person name="Barker D."/>
            <person name="Saunders D."/>
            <person name="Wallis J."/>
            <person name="Babbage A."/>
            <person name="Hammond S."/>
            <person name="Mashreghi-Mohammadi M."/>
            <person name="Barr L."/>
            <person name="Martin S."/>
            <person name="Wray P."/>
            <person name="Ellington A."/>
            <person name="Matthews N."/>
            <person name="Ellwood M."/>
            <person name="Woodmansey R."/>
            <person name="Clark G."/>
            <person name="Cooper J."/>
            <person name="Tromans A."/>
            <person name="Grafham D."/>
            <person name="Skuce C."/>
            <person name="Pandian R."/>
            <person name="Andrews R."/>
            <person name="Harrison E."/>
            <person name="Kimberley A."/>
            <person name="Garnett J."/>
            <person name="Fosker N."/>
            <person name="Hall R."/>
            <person name="Garner P."/>
            <person name="Kelly D."/>
            <person name="Bird C."/>
            <person name="Palmer S."/>
            <person name="Gehring I."/>
            <person name="Berger A."/>
            <person name="Dooley C.M."/>
            <person name="Ersan-Urun Z."/>
            <person name="Eser C."/>
            <person name="Geiger H."/>
            <person name="Geisler M."/>
            <person name="Karotki L."/>
            <person name="Kirn A."/>
            <person name="Konantz J."/>
            <person name="Konantz M."/>
            <person name="Oberlander M."/>
            <person name="Rudolph-Geiger S."/>
            <person name="Teucke M."/>
            <person name="Lanz C."/>
            <person name="Raddatz G."/>
            <person name="Osoegawa K."/>
            <person name="Zhu B."/>
            <person name="Rapp A."/>
            <person name="Widaa S."/>
            <person name="Langford C."/>
            <person name="Yang F."/>
            <person name="Schuster S.C."/>
            <person name="Carter N.P."/>
            <person name="Harrow J."/>
            <person name="Ning Z."/>
            <person name="Herrero J."/>
            <person name="Searle S.M."/>
            <person name="Enright A."/>
            <person name="Geisler R."/>
            <person name="Plasterk R.H."/>
            <person name="Lee C."/>
            <person name="Westerfield M."/>
            <person name="de Jong P.J."/>
            <person name="Zon L.I."/>
            <person name="Postlethwait J.H."/>
            <person name="Nusslein-Volhard C."/>
            <person name="Hubbard T.J."/>
            <person name="Roest Crollius H."/>
            <person name="Rogers J."/>
            <person name="Stemple D.L."/>
        </authorList>
    </citation>
    <scope>NUCLEOTIDE SEQUENCE [LARGE SCALE GENOMIC DNA]</scope>
    <source>
        <strain>Tuebingen</strain>
    </source>
</reference>
<reference key="3">
    <citation type="journal article" date="2013" name="Am. J. Hum. Genet.">
        <title>Defects in the IFT-B component IFT172 cause Jeune and Mainzer-Saldino syndromes in humans.</title>
        <authorList>
            <consortium name="UK10K Consortium"/>
            <person name="Halbritter J."/>
            <person name="Bizet A.A."/>
            <person name="Schmidts M."/>
            <person name="Porath J.D."/>
            <person name="Braun D.A."/>
            <person name="Gee H.Y."/>
            <person name="McInerney-Leo A.M."/>
            <person name="Krug P."/>
            <person name="Filhol E."/>
            <person name="Davis E.E."/>
            <person name="Airik R."/>
            <person name="Czarnecki P.G."/>
            <person name="Lehman A.M."/>
            <person name="Trnka P."/>
            <person name="Nitschke P."/>
            <person name="Bole-Feysot C."/>
            <person name="Schueler M."/>
            <person name="Knebelmann B."/>
            <person name="Burtey S."/>
            <person name="Szabo A.J."/>
            <person name="Tory K."/>
            <person name="Leo P.J."/>
            <person name="Gardiner B."/>
            <person name="McKenzie F.A."/>
            <person name="Zankl A."/>
            <person name="Brown M.A."/>
            <person name="Hartley J.L."/>
            <person name="Maher E.R."/>
            <person name="Li C."/>
            <person name="Leroux M.R."/>
            <person name="Scambler P.J."/>
            <person name="Zhan S.H."/>
            <person name="Jones S.J."/>
            <person name="Kayserili H."/>
            <person name="Tuysuz B."/>
            <person name="Moorani K.N."/>
            <person name="Constantinescu A."/>
            <person name="Krantz I.D."/>
            <person name="Kaplan B.S."/>
            <person name="Shah J.V."/>
            <person name="Hurd T.W."/>
            <person name="Doherty D."/>
            <person name="Katsanis N."/>
            <person name="Duncan E.L."/>
            <person name="Otto E.A."/>
            <person name="Beales P.L."/>
            <person name="Mitchison H.M."/>
            <person name="Saunier S."/>
            <person name="Hildebrandt F."/>
        </authorList>
    </citation>
    <scope>DISRUPTION PHENOTYPE</scope>
</reference>
<keyword id="KW-0966">Cell projection</keyword>
<keyword id="KW-0969">Cilium</keyword>
<keyword id="KW-0217">Developmental protein</keyword>
<keyword id="KW-1185">Reference proteome</keyword>
<keyword id="KW-0677">Repeat</keyword>
<keyword id="KW-0802">TPR repeat</keyword>
<keyword id="KW-0853">WD repeat</keyword>
<organism>
    <name type="scientific">Danio rerio</name>
    <name type="common">Zebrafish</name>
    <name type="synonym">Brachydanio rerio</name>
    <dbReference type="NCBI Taxonomy" id="7955"/>
    <lineage>
        <taxon>Eukaryota</taxon>
        <taxon>Metazoa</taxon>
        <taxon>Chordata</taxon>
        <taxon>Craniata</taxon>
        <taxon>Vertebrata</taxon>
        <taxon>Euteleostomi</taxon>
        <taxon>Actinopterygii</taxon>
        <taxon>Neopterygii</taxon>
        <taxon>Teleostei</taxon>
        <taxon>Ostariophysi</taxon>
        <taxon>Cypriniformes</taxon>
        <taxon>Danionidae</taxon>
        <taxon>Danioninae</taxon>
        <taxon>Danio</taxon>
    </lineage>
</organism>
<name>IF172_DANRE</name>